<evidence type="ECO:0000255" key="1">
    <source>
        <dbReference type="HAMAP-Rule" id="MF_01717"/>
    </source>
</evidence>
<sequence>MAMPRNLPGQAAHDEADQEILRLDGIRKRFPGVLALDGIRLDLRRGEVHAVCGENGAGKSTLMKIISGQYLPDEGAVHYRGAPVRFRSASEAQAAGISIIHQELNLVPHLSVAENLFLAREPRRGPFVDTKRMNAEAARCIARIGLNVAPTTKVGVLSIAQQQMVEIAKALSHDARVLIMDEPTSSLTEAETVQLFRIIEELRADGVAILYISHRLDEMAQIVDRVTVLRDGRHISTDDFADVSIDDIVARMVGRTLDDAYPSRQSVPTDDVLLDVRDLRRDGVFGPVSFALRRGEILGFAGLMGAGRTEIARAIFGADRPDGGTIALHGRPVTIRSPREAIRHGIAYLSEDRKKEGLALPMPVAANLTLANVRGIASRFGFLRFDDEIDVARRYVQDLAIRTPSVHQRVRNLSGGNQQKVVIGKWLYRGSKILFFDEPTRGIDVGAKFAIYGLMDRLAADGVGVVLISSELPELLGMTDRIAVFHEGRMTAILDTKHTSQEEIMHYASGRSHA</sequence>
<reference key="1">
    <citation type="submission" date="2006-05" db="EMBL/GenBank/DDBJ databases">
        <title>Complete sequence of chromosome 3 of Burkholderia cenocepacia AU 1054.</title>
        <authorList>
            <consortium name="US DOE Joint Genome Institute"/>
            <person name="Copeland A."/>
            <person name="Lucas S."/>
            <person name="Lapidus A."/>
            <person name="Barry K."/>
            <person name="Detter J.C."/>
            <person name="Glavina del Rio T."/>
            <person name="Hammon N."/>
            <person name="Israni S."/>
            <person name="Dalin E."/>
            <person name="Tice H."/>
            <person name="Pitluck S."/>
            <person name="Chain P."/>
            <person name="Malfatti S."/>
            <person name="Shin M."/>
            <person name="Vergez L."/>
            <person name="Schmutz J."/>
            <person name="Larimer F."/>
            <person name="Land M."/>
            <person name="Hauser L."/>
            <person name="Kyrpides N."/>
            <person name="Lykidis A."/>
            <person name="LiPuma J.J."/>
            <person name="Konstantinidis K."/>
            <person name="Tiedje J.M."/>
            <person name="Richardson P."/>
        </authorList>
    </citation>
    <scope>NUCLEOTIDE SEQUENCE [LARGE SCALE GENOMIC DNA]</scope>
    <source>
        <strain>AU 1054</strain>
    </source>
</reference>
<protein>
    <recommendedName>
        <fullName evidence="1">Putative ribose/galactose/methyl galactoside import ATP-binding protein 3</fullName>
        <ecNumber evidence="1">7.5.2.11</ecNumber>
        <ecNumber evidence="1">7.5.2.7</ecNumber>
    </recommendedName>
</protein>
<gene>
    <name type="ordered locus">Bcen_6474</name>
</gene>
<accession>Q1BGC0</accession>
<proteinExistence type="inferred from homology"/>
<dbReference type="EC" id="7.5.2.11" evidence="1"/>
<dbReference type="EC" id="7.5.2.7" evidence="1"/>
<dbReference type="EMBL" id="CP000380">
    <property type="protein sequence ID" value="ABF81335.1"/>
    <property type="molecule type" value="Genomic_DNA"/>
</dbReference>
<dbReference type="SMR" id="Q1BGC0"/>
<dbReference type="HOGENOM" id="CLU_000604_92_3_4"/>
<dbReference type="GO" id="GO:0005886">
    <property type="term" value="C:plasma membrane"/>
    <property type="evidence" value="ECO:0007669"/>
    <property type="project" value="UniProtKB-SubCell"/>
</dbReference>
<dbReference type="GO" id="GO:0015611">
    <property type="term" value="F:ABC-type D-ribose transporter activity"/>
    <property type="evidence" value="ECO:0007669"/>
    <property type="project" value="UniProtKB-EC"/>
</dbReference>
<dbReference type="GO" id="GO:0005524">
    <property type="term" value="F:ATP binding"/>
    <property type="evidence" value="ECO:0007669"/>
    <property type="project" value="UniProtKB-KW"/>
</dbReference>
<dbReference type="GO" id="GO:0016887">
    <property type="term" value="F:ATP hydrolysis activity"/>
    <property type="evidence" value="ECO:0007669"/>
    <property type="project" value="InterPro"/>
</dbReference>
<dbReference type="CDD" id="cd03216">
    <property type="entry name" value="ABC_Carb_Monos_I"/>
    <property type="match status" value="1"/>
</dbReference>
<dbReference type="CDD" id="cd03215">
    <property type="entry name" value="ABC_Carb_Monos_II"/>
    <property type="match status" value="1"/>
</dbReference>
<dbReference type="FunFam" id="3.40.50.300:FF:000127">
    <property type="entry name" value="Ribose import ATP-binding protein RbsA"/>
    <property type="match status" value="1"/>
</dbReference>
<dbReference type="Gene3D" id="3.40.50.300">
    <property type="entry name" value="P-loop containing nucleotide triphosphate hydrolases"/>
    <property type="match status" value="2"/>
</dbReference>
<dbReference type="InterPro" id="IPR003593">
    <property type="entry name" value="AAA+_ATPase"/>
</dbReference>
<dbReference type="InterPro" id="IPR050107">
    <property type="entry name" value="ABC_carbohydrate_import_ATPase"/>
</dbReference>
<dbReference type="InterPro" id="IPR003439">
    <property type="entry name" value="ABC_transporter-like_ATP-bd"/>
</dbReference>
<dbReference type="InterPro" id="IPR017871">
    <property type="entry name" value="ABC_transporter-like_CS"/>
</dbReference>
<dbReference type="InterPro" id="IPR027417">
    <property type="entry name" value="P-loop_NTPase"/>
</dbReference>
<dbReference type="PANTHER" id="PTHR43790">
    <property type="entry name" value="CARBOHYDRATE TRANSPORT ATP-BINDING PROTEIN MG119-RELATED"/>
    <property type="match status" value="1"/>
</dbReference>
<dbReference type="PANTHER" id="PTHR43790:SF3">
    <property type="entry name" value="D-ALLOSE IMPORT ATP-BINDING PROTEIN ALSA-RELATED"/>
    <property type="match status" value="1"/>
</dbReference>
<dbReference type="Pfam" id="PF00005">
    <property type="entry name" value="ABC_tran"/>
    <property type="match status" value="2"/>
</dbReference>
<dbReference type="SMART" id="SM00382">
    <property type="entry name" value="AAA"/>
    <property type="match status" value="2"/>
</dbReference>
<dbReference type="SUPFAM" id="SSF52540">
    <property type="entry name" value="P-loop containing nucleoside triphosphate hydrolases"/>
    <property type="match status" value="2"/>
</dbReference>
<dbReference type="PROSITE" id="PS00211">
    <property type="entry name" value="ABC_TRANSPORTER_1"/>
    <property type="match status" value="1"/>
</dbReference>
<dbReference type="PROSITE" id="PS50893">
    <property type="entry name" value="ABC_TRANSPORTER_2"/>
    <property type="match status" value="2"/>
</dbReference>
<dbReference type="PROSITE" id="PS51260">
    <property type="entry name" value="MGLA"/>
    <property type="match status" value="1"/>
</dbReference>
<dbReference type="PROSITE" id="PS51254">
    <property type="entry name" value="RBSA"/>
    <property type="match status" value="1"/>
</dbReference>
<feature type="chain" id="PRO_0000262976" description="Putative ribose/galactose/methyl galactoside import ATP-binding protein 3">
    <location>
        <begin position="1"/>
        <end position="514"/>
    </location>
</feature>
<feature type="domain" description="ABC transporter 1" evidence="1">
    <location>
        <begin position="21"/>
        <end position="256"/>
    </location>
</feature>
<feature type="domain" description="ABC transporter 2" evidence="1">
    <location>
        <begin position="267"/>
        <end position="512"/>
    </location>
</feature>
<feature type="binding site" evidence="1">
    <location>
        <begin position="53"/>
        <end position="60"/>
    </location>
    <ligand>
        <name>ATP</name>
        <dbReference type="ChEBI" id="CHEBI:30616"/>
    </ligand>
</feature>
<comment type="function">
    <text evidence="1">Part of an ABC transporter complex involved in carbohydrate import. Could be involved in ribose, galactose and/or methyl galactoside import. Responsible for energy coupling to the transport system.</text>
</comment>
<comment type="catalytic activity">
    <reaction evidence="1">
        <text>D-ribose(out) + ATP + H2O = D-ribose(in) + ADP + phosphate + H(+)</text>
        <dbReference type="Rhea" id="RHEA:29903"/>
        <dbReference type="ChEBI" id="CHEBI:15377"/>
        <dbReference type="ChEBI" id="CHEBI:15378"/>
        <dbReference type="ChEBI" id="CHEBI:30616"/>
        <dbReference type="ChEBI" id="CHEBI:43474"/>
        <dbReference type="ChEBI" id="CHEBI:47013"/>
        <dbReference type="ChEBI" id="CHEBI:456216"/>
        <dbReference type="EC" id="7.5.2.7"/>
    </reaction>
</comment>
<comment type="catalytic activity">
    <reaction evidence="1">
        <text>D-galactose(out) + ATP + H2O = D-galactose(in) + ADP + phosphate + H(+)</text>
        <dbReference type="Rhea" id="RHEA:60156"/>
        <dbReference type="ChEBI" id="CHEBI:4139"/>
        <dbReference type="ChEBI" id="CHEBI:15377"/>
        <dbReference type="ChEBI" id="CHEBI:15378"/>
        <dbReference type="ChEBI" id="CHEBI:30616"/>
        <dbReference type="ChEBI" id="CHEBI:43474"/>
        <dbReference type="ChEBI" id="CHEBI:456216"/>
        <dbReference type="EC" id="7.5.2.11"/>
    </reaction>
</comment>
<comment type="subcellular location">
    <subcellularLocation>
        <location evidence="1">Cell inner membrane</location>
        <topology evidence="1">Peripheral membrane protein</topology>
    </subcellularLocation>
</comment>
<comment type="similarity">
    <text evidence="1">Belongs to the ABC transporter superfamily. Carbohydrate importer 2 (CUT2) (TC 3.A.1.2) family.</text>
</comment>
<keyword id="KW-0067">ATP-binding</keyword>
<keyword id="KW-0997">Cell inner membrane</keyword>
<keyword id="KW-1003">Cell membrane</keyword>
<keyword id="KW-0472">Membrane</keyword>
<keyword id="KW-0547">Nucleotide-binding</keyword>
<keyword id="KW-0677">Repeat</keyword>
<keyword id="KW-0762">Sugar transport</keyword>
<keyword id="KW-1278">Translocase</keyword>
<keyword id="KW-0813">Transport</keyword>
<name>RGMG3_BURO1</name>
<organism>
    <name type="scientific">Burkholderia orbicola (strain AU 1054)</name>
    <dbReference type="NCBI Taxonomy" id="331271"/>
    <lineage>
        <taxon>Bacteria</taxon>
        <taxon>Pseudomonadati</taxon>
        <taxon>Pseudomonadota</taxon>
        <taxon>Betaproteobacteria</taxon>
        <taxon>Burkholderiales</taxon>
        <taxon>Burkholderiaceae</taxon>
        <taxon>Burkholderia</taxon>
        <taxon>Burkholderia cepacia complex</taxon>
        <taxon>Burkholderia orbicola</taxon>
    </lineage>
</organism>